<comment type="subunit">
    <text>Part of the 50S ribosomal subunit.</text>
</comment>
<comment type="mass spectrometry" mass="10848.0" method="MALDI" evidence="2"/>
<comment type="similarity">
    <text evidence="3">Belongs to the bacterial ribosomal protein bL28 family.</text>
</comment>
<feature type="initiator methionine" description="Removed" evidence="1">
    <location>
        <position position="1"/>
    </location>
</feature>
<feature type="chain" id="PRO_0000178577" description="Large ribosomal subunit protein bL28">
    <location>
        <begin position="2"/>
        <end position="98"/>
    </location>
</feature>
<feature type="turn" evidence="4">
    <location>
        <begin position="6"/>
        <end position="8"/>
    </location>
</feature>
<feature type="strand" evidence="4">
    <location>
        <begin position="13"/>
        <end position="23"/>
    </location>
</feature>
<feature type="turn" evidence="4">
    <location>
        <begin position="25"/>
        <end position="28"/>
    </location>
</feature>
<feature type="strand" evidence="4">
    <location>
        <begin position="29"/>
        <end position="42"/>
    </location>
</feature>
<feature type="strand" evidence="4">
    <location>
        <begin position="46"/>
        <end position="50"/>
    </location>
</feature>
<feature type="strand" evidence="4">
    <location>
        <begin position="53"/>
        <end position="56"/>
    </location>
</feature>
<feature type="strand" evidence="4">
    <location>
        <begin position="59"/>
        <end position="63"/>
    </location>
</feature>
<feature type="helix" evidence="4">
    <location>
        <begin position="64"/>
        <end position="66"/>
    </location>
</feature>
<feature type="helix" evidence="4">
    <location>
        <begin position="67"/>
        <end position="75"/>
    </location>
</feature>
<feature type="strand" evidence="4">
    <location>
        <begin position="78"/>
        <end position="80"/>
    </location>
</feature>
<feature type="helix" evidence="4">
    <location>
        <begin position="87"/>
        <end position="92"/>
    </location>
</feature>
<evidence type="ECO:0000269" key="1">
    <source>
    </source>
</evidence>
<evidence type="ECO:0000269" key="2">
    <source>
    </source>
</evidence>
<evidence type="ECO:0000305" key="3"/>
<evidence type="ECO:0007829" key="4">
    <source>
        <dbReference type="PDB" id="4WT8"/>
    </source>
</evidence>
<proteinExistence type="evidence at protein level"/>
<organism>
    <name type="scientific">Thermus thermophilus (strain ATCC 27634 / DSM 579 / HB8)</name>
    <dbReference type="NCBI Taxonomy" id="300852"/>
    <lineage>
        <taxon>Bacteria</taxon>
        <taxon>Thermotogati</taxon>
        <taxon>Deinococcota</taxon>
        <taxon>Deinococci</taxon>
        <taxon>Thermales</taxon>
        <taxon>Thermaceae</taxon>
        <taxon>Thermus</taxon>
    </lineage>
</organism>
<keyword id="KW-0002">3D-structure</keyword>
<keyword id="KW-0903">Direct protein sequencing</keyword>
<keyword id="KW-1185">Reference proteome</keyword>
<keyword id="KW-0687">Ribonucleoprotein</keyword>
<keyword id="KW-0689">Ribosomal protein</keyword>
<protein>
    <recommendedName>
        <fullName evidence="3">Large ribosomal subunit protein bL28</fullName>
    </recommendedName>
    <alternativeName>
        <fullName>50S ribosomal protein L28</fullName>
    </alternativeName>
</protein>
<accession>P60494</accession>
<accession>Q5SMA1</accession>
<name>RL28_THET8</name>
<gene>
    <name type="primary">rpmB</name>
    <name type="ordered locus">TTHA0042</name>
</gene>
<dbReference type="EMBL" id="AP008226">
    <property type="protein sequence ID" value="BAD69865.1"/>
    <property type="molecule type" value="Genomic_DNA"/>
</dbReference>
<dbReference type="RefSeq" id="WP_008631133.1">
    <property type="nucleotide sequence ID" value="NC_006461.1"/>
</dbReference>
<dbReference type="RefSeq" id="YP_143308.1">
    <property type="nucleotide sequence ID" value="NC_006461.1"/>
</dbReference>
<dbReference type="PDB" id="1VVJ">
    <property type="method" value="X-ray"/>
    <property type="resolution" value="3.44 A"/>
    <property type="chains" value="R1/Y1=1-98"/>
</dbReference>
<dbReference type="PDB" id="1VY4">
    <property type="method" value="X-ray"/>
    <property type="resolution" value="2.60 A"/>
    <property type="chains" value="B1/D1=1-98"/>
</dbReference>
<dbReference type="PDB" id="1VY5">
    <property type="method" value="X-ray"/>
    <property type="resolution" value="2.55 A"/>
    <property type="chains" value="B1/D1=1-98"/>
</dbReference>
<dbReference type="PDB" id="1VY6">
    <property type="method" value="X-ray"/>
    <property type="resolution" value="2.90 A"/>
    <property type="chains" value="B1/D1=1-98"/>
</dbReference>
<dbReference type="PDB" id="1VY7">
    <property type="method" value="X-ray"/>
    <property type="resolution" value="2.80 A"/>
    <property type="chains" value="B1/D1=1-98"/>
</dbReference>
<dbReference type="PDB" id="4L47">
    <property type="method" value="X-ray"/>
    <property type="resolution" value="3.22 A"/>
    <property type="chains" value="R1/Y1=1-98"/>
</dbReference>
<dbReference type="PDB" id="4L71">
    <property type="method" value="X-ray"/>
    <property type="resolution" value="3.90 A"/>
    <property type="chains" value="R1/Y1=1-98"/>
</dbReference>
<dbReference type="PDB" id="4LEL">
    <property type="method" value="X-ray"/>
    <property type="resolution" value="3.90 A"/>
    <property type="chains" value="R1/Y1=1-98"/>
</dbReference>
<dbReference type="PDB" id="4LFZ">
    <property type="method" value="X-ray"/>
    <property type="resolution" value="3.92 A"/>
    <property type="chains" value="R1/Y1=1-98"/>
</dbReference>
<dbReference type="PDB" id="4LNT">
    <property type="method" value="X-ray"/>
    <property type="resolution" value="2.94 A"/>
    <property type="chains" value="R1/Y1=1-98"/>
</dbReference>
<dbReference type="PDB" id="4LSK">
    <property type="method" value="X-ray"/>
    <property type="resolution" value="3.48 A"/>
    <property type="chains" value="R1/Y1=1-98"/>
</dbReference>
<dbReference type="PDB" id="4LT8">
    <property type="method" value="X-ray"/>
    <property type="resolution" value="3.14 A"/>
    <property type="chains" value="R1/Y1=1-98"/>
</dbReference>
<dbReference type="PDB" id="4P6F">
    <property type="method" value="X-ray"/>
    <property type="resolution" value="3.60 A"/>
    <property type="chains" value="R1/Y1=1-98"/>
</dbReference>
<dbReference type="PDB" id="4P70">
    <property type="method" value="X-ray"/>
    <property type="resolution" value="3.68 A"/>
    <property type="chains" value="R1/Y1=1-98"/>
</dbReference>
<dbReference type="PDB" id="4TUA">
    <property type="method" value="X-ray"/>
    <property type="resolution" value="3.60 A"/>
    <property type="chains" value="R1/Y1=1-98"/>
</dbReference>
<dbReference type="PDB" id="4TUB">
    <property type="method" value="X-ray"/>
    <property type="resolution" value="3.60 A"/>
    <property type="chains" value="R1/Y1=1-98"/>
</dbReference>
<dbReference type="PDB" id="4TUC">
    <property type="method" value="X-ray"/>
    <property type="resolution" value="3.60 A"/>
    <property type="chains" value="R1/Y1=1-98"/>
</dbReference>
<dbReference type="PDB" id="4TUD">
    <property type="method" value="X-ray"/>
    <property type="resolution" value="3.60 A"/>
    <property type="chains" value="R1/Y1=1-98"/>
</dbReference>
<dbReference type="PDB" id="4TUE">
    <property type="method" value="X-ray"/>
    <property type="resolution" value="3.50 A"/>
    <property type="chains" value="R1/Y1=1-98"/>
</dbReference>
<dbReference type="PDB" id="4V51">
    <property type="method" value="X-ray"/>
    <property type="resolution" value="2.80 A"/>
    <property type="chains" value="B1/D1=2-98"/>
</dbReference>
<dbReference type="PDB" id="4V5A">
    <property type="method" value="X-ray"/>
    <property type="resolution" value="3.50 A"/>
    <property type="chains" value="B1/D1=2-98"/>
</dbReference>
<dbReference type="PDB" id="4V5C">
    <property type="method" value="X-ray"/>
    <property type="resolution" value="3.30 A"/>
    <property type="chains" value="B1/D1=1-98"/>
</dbReference>
<dbReference type="PDB" id="4V5D">
    <property type="method" value="X-ray"/>
    <property type="resolution" value="3.50 A"/>
    <property type="chains" value="B1/D1=1-98"/>
</dbReference>
<dbReference type="PDB" id="4V5E">
    <property type="method" value="X-ray"/>
    <property type="resolution" value="3.45 A"/>
    <property type="chains" value="B1/D1=1-98"/>
</dbReference>
<dbReference type="PDB" id="4V5F">
    <property type="method" value="X-ray"/>
    <property type="resolution" value="3.60 A"/>
    <property type="chains" value="B1/D1=1-98"/>
</dbReference>
<dbReference type="PDB" id="4V5G">
    <property type="method" value="X-ray"/>
    <property type="resolution" value="3.60 A"/>
    <property type="chains" value="B1/D1=1-98"/>
</dbReference>
<dbReference type="PDB" id="4V5J">
    <property type="method" value="X-ray"/>
    <property type="resolution" value="3.10 A"/>
    <property type="chains" value="B1/D1=1-98"/>
</dbReference>
<dbReference type="PDB" id="4V5K">
    <property type="method" value="X-ray"/>
    <property type="resolution" value="3.20 A"/>
    <property type="chains" value="B1/D1=1-98"/>
</dbReference>
<dbReference type="PDB" id="4V5L">
    <property type="method" value="X-ray"/>
    <property type="resolution" value="3.10 A"/>
    <property type="chains" value="B1=1-98"/>
</dbReference>
<dbReference type="PDB" id="4V5M">
    <property type="method" value="EM"/>
    <property type="resolution" value="7.80 A"/>
    <property type="chains" value="B1=1-98"/>
</dbReference>
<dbReference type="PDB" id="4V5N">
    <property type="method" value="EM"/>
    <property type="resolution" value="7.60 A"/>
    <property type="chains" value="B1=1-98"/>
</dbReference>
<dbReference type="PDB" id="4V5P">
    <property type="method" value="X-ray"/>
    <property type="resolution" value="3.10 A"/>
    <property type="chains" value="B1/D1=1-98"/>
</dbReference>
<dbReference type="PDB" id="4V5Q">
    <property type="method" value="X-ray"/>
    <property type="resolution" value="3.10 A"/>
    <property type="chains" value="B1/D1=1-98"/>
</dbReference>
<dbReference type="PDB" id="4V5R">
    <property type="method" value="X-ray"/>
    <property type="resolution" value="3.10 A"/>
    <property type="chains" value="B1/D1=1-98"/>
</dbReference>
<dbReference type="PDB" id="4V5S">
    <property type="method" value="X-ray"/>
    <property type="resolution" value="3.10 A"/>
    <property type="chains" value="B1/D1=1-98"/>
</dbReference>
<dbReference type="PDB" id="4V68">
    <property type="method" value="EM"/>
    <property type="resolution" value="6.40 A"/>
    <property type="chains" value="B1=8-96"/>
</dbReference>
<dbReference type="PDB" id="4V6A">
    <property type="method" value="X-ray"/>
    <property type="resolution" value="3.10 A"/>
    <property type="chains" value="B1/D1=1-98"/>
</dbReference>
<dbReference type="PDB" id="4V6F">
    <property type="method" value="X-ray"/>
    <property type="resolution" value="3.10 A"/>
    <property type="chains" value="AZ/DZ=1-98"/>
</dbReference>
<dbReference type="PDB" id="4V6G">
    <property type="method" value="X-ray"/>
    <property type="resolution" value="3.50 A"/>
    <property type="chains" value="BZ/DZ=1-98"/>
</dbReference>
<dbReference type="PDB" id="4V7J">
    <property type="method" value="X-ray"/>
    <property type="resolution" value="3.30 A"/>
    <property type="chains" value="A1/B1=1-98"/>
</dbReference>
<dbReference type="PDB" id="4V7K">
    <property type="method" value="X-ray"/>
    <property type="resolution" value="3.60 A"/>
    <property type="chains" value="A1/B1=1-98"/>
</dbReference>
<dbReference type="PDB" id="4V7L">
    <property type="method" value="X-ray"/>
    <property type="resolution" value="3.00 A"/>
    <property type="chains" value="B1/D1=1-98"/>
</dbReference>
<dbReference type="PDB" id="4V7M">
    <property type="method" value="X-ray"/>
    <property type="resolution" value="3.45 A"/>
    <property type="chains" value="B1/D1=1-98"/>
</dbReference>
<dbReference type="PDB" id="4V7W">
    <property type="method" value="X-ray"/>
    <property type="resolution" value="3.00 A"/>
    <property type="chains" value="B1/D1=1-98"/>
</dbReference>
<dbReference type="PDB" id="4V7X">
    <property type="method" value="X-ray"/>
    <property type="resolution" value="3.00 A"/>
    <property type="chains" value="B1/D1=1-98"/>
</dbReference>
<dbReference type="PDB" id="4V7Y">
    <property type="method" value="X-ray"/>
    <property type="resolution" value="3.00 A"/>
    <property type="chains" value="B1/D1=1-98"/>
</dbReference>
<dbReference type="PDB" id="4V7Z">
    <property type="method" value="X-ray"/>
    <property type="resolution" value="3.10 A"/>
    <property type="chains" value="B1/D1=1-98"/>
</dbReference>
<dbReference type="PDB" id="4V87">
    <property type="method" value="X-ray"/>
    <property type="resolution" value="3.10 A"/>
    <property type="chains" value="AZ/DZ=2-98"/>
</dbReference>
<dbReference type="PDB" id="4V8A">
    <property type="method" value="X-ray"/>
    <property type="resolution" value="3.20 A"/>
    <property type="chains" value="A1/B1=1-98"/>
</dbReference>
<dbReference type="PDB" id="4V8B">
    <property type="method" value="X-ray"/>
    <property type="resolution" value="3.00 A"/>
    <property type="chains" value="BZ/DZ=1-98"/>
</dbReference>
<dbReference type="PDB" id="4V8C">
    <property type="method" value="X-ray"/>
    <property type="resolution" value="3.30 A"/>
    <property type="chains" value="AZ/BZ=1-98"/>
</dbReference>
<dbReference type="PDB" id="4V8D">
    <property type="method" value="X-ray"/>
    <property type="resolution" value="3.00 A"/>
    <property type="chains" value="BZ/DZ=1-98"/>
</dbReference>
<dbReference type="PDB" id="4V8E">
    <property type="method" value="X-ray"/>
    <property type="resolution" value="3.30 A"/>
    <property type="chains" value="AZ/CZ=1-98"/>
</dbReference>
<dbReference type="PDB" id="4V8F">
    <property type="method" value="X-ray"/>
    <property type="resolution" value="3.30 A"/>
    <property type="chains" value="AZ/DZ=1-98"/>
</dbReference>
<dbReference type="PDB" id="4V8G">
    <property type="method" value="X-ray"/>
    <property type="resolution" value="3.00 A"/>
    <property type="chains" value="B1/D1=1-98"/>
</dbReference>
<dbReference type="PDB" id="4V8H">
    <property type="method" value="X-ray"/>
    <property type="resolution" value="3.10 A"/>
    <property type="chains" value="B1/D1=1-98"/>
</dbReference>
<dbReference type="PDB" id="4V8I">
    <property type="method" value="X-ray"/>
    <property type="resolution" value="2.70 A"/>
    <property type="chains" value="B1/D1=1-98"/>
</dbReference>
<dbReference type="PDB" id="4V8J">
    <property type="method" value="X-ray"/>
    <property type="resolution" value="3.90 A"/>
    <property type="chains" value="B1/D1=1-98"/>
</dbReference>
<dbReference type="PDB" id="4V8N">
    <property type="method" value="X-ray"/>
    <property type="resolution" value="3.10 A"/>
    <property type="chains" value="B1/D1=1-98"/>
</dbReference>
<dbReference type="PDB" id="4V8O">
    <property type="method" value="X-ray"/>
    <property type="resolution" value="3.80 A"/>
    <property type="chains" value="B1=1-98"/>
</dbReference>
<dbReference type="PDB" id="4V8Q">
    <property type="method" value="X-ray"/>
    <property type="resolution" value="3.10 A"/>
    <property type="chains" value="A1=1-98"/>
</dbReference>
<dbReference type="PDB" id="4V8U">
    <property type="method" value="X-ray"/>
    <property type="resolution" value="3.70 A"/>
    <property type="chains" value="B1/D1=1-98"/>
</dbReference>
<dbReference type="PDB" id="4V8X">
    <property type="method" value="X-ray"/>
    <property type="resolution" value="3.35 A"/>
    <property type="chains" value="B1/D1=1-98"/>
</dbReference>
<dbReference type="PDB" id="4V90">
    <property type="method" value="X-ray"/>
    <property type="resolution" value="2.95 A"/>
    <property type="chains" value="B1=2-98"/>
</dbReference>
<dbReference type="PDB" id="4V95">
    <property type="method" value="X-ray"/>
    <property type="resolution" value="3.20 A"/>
    <property type="chains" value="B1/D1=1-98"/>
</dbReference>
<dbReference type="PDB" id="4V97">
    <property type="method" value="X-ray"/>
    <property type="resolution" value="3.52 A"/>
    <property type="chains" value="B1/D1=1-98"/>
</dbReference>
<dbReference type="PDB" id="4V9A">
    <property type="method" value="X-ray"/>
    <property type="resolution" value="3.30 A"/>
    <property type="chains" value="BZ/DZ=1-98"/>
</dbReference>
<dbReference type="PDB" id="4V9B">
    <property type="method" value="X-ray"/>
    <property type="resolution" value="3.10 A"/>
    <property type="chains" value="BZ/DZ=1-98"/>
</dbReference>
<dbReference type="PDB" id="4V9H">
    <property type="method" value="X-ray"/>
    <property type="resolution" value="2.86 A"/>
    <property type="chains" value="B1=1-98"/>
</dbReference>
<dbReference type="PDB" id="4V9I">
    <property type="method" value="X-ray"/>
    <property type="resolution" value="3.30 A"/>
    <property type="chains" value="B1/D1=3-95"/>
</dbReference>
<dbReference type="PDB" id="4V9R">
    <property type="method" value="X-ray"/>
    <property type="resolution" value="3.00 A"/>
    <property type="chains" value="B1/D1=1-98"/>
</dbReference>
<dbReference type="PDB" id="4V9S">
    <property type="method" value="X-ray"/>
    <property type="resolution" value="3.10 A"/>
    <property type="chains" value="B1/D1=1-98"/>
</dbReference>
<dbReference type="PDB" id="4W2E">
    <property type="method" value="X-ray"/>
    <property type="resolution" value="2.90 A"/>
    <property type="chains" value="1=1-98"/>
</dbReference>
<dbReference type="PDB" id="4W2F">
    <property type="method" value="X-ray"/>
    <property type="resolution" value="2.40 A"/>
    <property type="chains" value="B1/D1=1-98"/>
</dbReference>
<dbReference type="PDB" id="4W2G">
    <property type="method" value="X-ray"/>
    <property type="resolution" value="2.55 A"/>
    <property type="chains" value="B1/D1=1-98"/>
</dbReference>
<dbReference type="PDB" id="4W2H">
    <property type="method" value="X-ray"/>
    <property type="resolution" value="2.70 A"/>
    <property type="chains" value="B1/D1=1-98"/>
</dbReference>
<dbReference type="PDB" id="4W2I">
    <property type="method" value="X-ray"/>
    <property type="resolution" value="2.70 A"/>
    <property type="chains" value="B1/D1=1-98"/>
</dbReference>
<dbReference type="PDB" id="4W4G">
    <property type="method" value="X-ray"/>
    <property type="resolution" value="3.30 A"/>
    <property type="chains" value="R1/Y1=1-98"/>
</dbReference>
<dbReference type="PDB" id="4WPO">
    <property type="method" value="X-ray"/>
    <property type="resolution" value="2.80 A"/>
    <property type="chains" value="A1/C1=1-98"/>
</dbReference>
<dbReference type="PDB" id="4WQ1">
    <property type="method" value="X-ray"/>
    <property type="resolution" value="3.10 A"/>
    <property type="chains" value="F5/J8=1-98"/>
</dbReference>
<dbReference type="PDB" id="4WQF">
    <property type="method" value="X-ray"/>
    <property type="resolution" value="2.80 A"/>
    <property type="chains" value="A1/C1=1-98"/>
</dbReference>
<dbReference type="PDB" id="4WQR">
    <property type="method" value="X-ray"/>
    <property type="resolution" value="3.15 A"/>
    <property type="chains" value="F5/J8=1-98"/>
</dbReference>
<dbReference type="PDB" id="4WQU">
    <property type="method" value="X-ray"/>
    <property type="resolution" value="2.80 A"/>
    <property type="chains" value="A1/C1=1-98"/>
</dbReference>
<dbReference type="PDB" id="4WQY">
    <property type="method" value="X-ray"/>
    <property type="resolution" value="2.80 A"/>
    <property type="chains" value="A1/C1=1-98"/>
</dbReference>
<dbReference type="PDB" id="4WR6">
    <property type="method" value="X-ray"/>
    <property type="resolution" value="3.05 A"/>
    <property type="chains" value="F5/J8=1-98"/>
</dbReference>
<dbReference type="PDB" id="4WRA">
    <property type="method" value="X-ray"/>
    <property type="resolution" value="3.05 A"/>
    <property type="chains" value="F5/J8=1-98"/>
</dbReference>
<dbReference type="PDB" id="4WRO">
    <property type="method" value="X-ray"/>
    <property type="resolution" value="3.05 A"/>
    <property type="chains" value="J8=1-98"/>
</dbReference>
<dbReference type="PDB" id="4WSD">
    <property type="method" value="X-ray"/>
    <property type="resolution" value="2.95 A"/>
    <property type="chains" value="F5/J8=1-98"/>
</dbReference>
<dbReference type="PDB" id="4WSM">
    <property type="method" value="X-ray"/>
    <property type="resolution" value="3.30 A"/>
    <property type="chains" value="F5/J8=1-98"/>
</dbReference>
<dbReference type="PDB" id="4WT1">
    <property type="method" value="X-ray"/>
    <property type="resolution" value="3.05 A"/>
    <property type="chains" value="F5/J8=1-98"/>
</dbReference>
<dbReference type="PDB" id="4WT8">
    <property type="method" value="X-ray"/>
    <property type="resolution" value="3.40 A"/>
    <property type="chains" value="CH/DH=3-95"/>
</dbReference>
<dbReference type="PDB" id="4WU1">
    <property type="method" value="X-ray"/>
    <property type="resolution" value="3.20 A"/>
    <property type="chains" value="F5/J8=1-98"/>
</dbReference>
<dbReference type="PDB" id="4WZD">
    <property type="method" value="X-ray"/>
    <property type="resolution" value="3.10 A"/>
    <property type="chains" value="F5/J8=1-98"/>
</dbReference>
<dbReference type="PDB" id="4WZO">
    <property type="method" value="X-ray"/>
    <property type="resolution" value="3.30 A"/>
    <property type="chains" value="F5/J8=1-98"/>
</dbReference>
<dbReference type="PDB" id="4Y4O">
    <property type="method" value="X-ray"/>
    <property type="resolution" value="2.30 A"/>
    <property type="chains" value="11/21=1-98"/>
</dbReference>
<dbReference type="PDB" id="4Y4P">
    <property type="method" value="X-ray"/>
    <property type="resolution" value="2.50 A"/>
    <property type="chains" value="11/21=1-98"/>
</dbReference>
<dbReference type="PDB" id="4YPB">
    <property type="method" value="X-ray"/>
    <property type="resolution" value="3.40 A"/>
    <property type="chains" value="R1/Y1=1-98"/>
</dbReference>
<dbReference type="PDB" id="4YZV">
    <property type="method" value="X-ray"/>
    <property type="resolution" value="3.10 A"/>
    <property type="chains" value="R1/Y1=1-98"/>
</dbReference>
<dbReference type="PDB" id="4Z3S">
    <property type="method" value="X-ray"/>
    <property type="resolution" value="2.65 A"/>
    <property type="chains" value="11/21=1-98"/>
</dbReference>
<dbReference type="PDB" id="4Z8C">
    <property type="method" value="X-ray"/>
    <property type="resolution" value="2.90 A"/>
    <property type="chains" value="11/21=1-98"/>
</dbReference>
<dbReference type="PDB" id="4ZER">
    <property type="method" value="X-ray"/>
    <property type="resolution" value="3.10 A"/>
    <property type="chains" value="11/21=2-98"/>
</dbReference>
<dbReference type="PDB" id="4ZSN">
    <property type="method" value="X-ray"/>
    <property type="resolution" value="3.60 A"/>
    <property type="chains" value="R1/Y1=1-98"/>
</dbReference>
<dbReference type="PDB" id="5CZP">
    <property type="method" value="X-ray"/>
    <property type="resolution" value="3.30 A"/>
    <property type="chains" value="R1/Y1=1-98"/>
</dbReference>
<dbReference type="PDB" id="5D8B">
    <property type="method" value="X-ray"/>
    <property type="resolution" value="3.63 A"/>
    <property type="chains" value="RB/V=1-98"/>
</dbReference>
<dbReference type="PDB" id="5DFE">
    <property type="method" value="X-ray"/>
    <property type="resolution" value="3.10 A"/>
    <property type="chains" value="R1/Y1=1-98"/>
</dbReference>
<dbReference type="PDB" id="5DOX">
    <property type="method" value="X-ray"/>
    <property type="resolution" value="3.10 A"/>
    <property type="chains" value="11/21=1-98"/>
</dbReference>
<dbReference type="PDB" id="5DOY">
    <property type="method" value="X-ray"/>
    <property type="resolution" value="2.60 A"/>
    <property type="chains" value="11/21=1-98"/>
</dbReference>
<dbReference type="PDB" id="5E7K">
    <property type="method" value="X-ray"/>
    <property type="resolution" value="3.20 A"/>
    <property type="chains" value="F5/J8=1-98"/>
</dbReference>
<dbReference type="PDB" id="5E81">
    <property type="method" value="X-ray"/>
    <property type="resolution" value="2.95 A"/>
    <property type="chains" value="F5/J8=1-98"/>
</dbReference>
<dbReference type="PDB" id="5EL4">
    <property type="method" value="X-ray"/>
    <property type="resolution" value="3.15 A"/>
    <property type="chains" value="F5/J8=1-98"/>
</dbReference>
<dbReference type="PDB" id="5EL5">
    <property type="method" value="X-ray"/>
    <property type="resolution" value="3.15 A"/>
    <property type="chains" value="F5/J8=1-98"/>
</dbReference>
<dbReference type="PDB" id="5EL6">
    <property type="method" value="X-ray"/>
    <property type="resolution" value="3.10 A"/>
    <property type="chains" value="F5/J8=1-98"/>
</dbReference>
<dbReference type="PDB" id="5EL7">
    <property type="method" value="X-ray"/>
    <property type="resolution" value="3.15 A"/>
    <property type="chains" value="F5/J8=1-98"/>
</dbReference>
<dbReference type="PDB" id="5F8K">
    <property type="method" value="X-ray"/>
    <property type="resolution" value="2.80 A"/>
    <property type="chains" value="11/21=2-98"/>
</dbReference>
<dbReference type="PDB" id="5FDU">
    <property type="method" value="X-ray"/>
    <property type="resolution" value="2.90 A"/>
    <property type="chains" value="11/21=2-98"/>
</dbReference>
<dbReference type="PDB" id="5FDV">
    <property type="method" value="X-ray"/>
    <property type="resolution" value="2.80 A"/>
    <property type="chains" value="11/21=2-98"/>
</dbReference>
<dbReference type="PDB" id="5HAU">
    <property type="method" value="X-ray"/>
    <property type="resolution" value="3.00 A"/>
    <property type="chains" value="1Z/2Z=1-98"/>
</dbReference>
<dbReference type="PDB" id="5HCP">
    <property type="method" value="X-ray"/>
    <property type="resolution" value="2.89 A"/>
    <property type="chains" value="11/21=1-98"/>
</dbReference>
<dbReference type="PDB" id="5HCQ">
    <property type="method" value="X-ray"/>
    <property type="resolution" value="2.80 A"/>
    <property type="chains" value="11/21=1-98"/>
</dbReference>
<dbReference type="PDB" id="5HCR">
    <property type="method" value="X-ray"/>
    <property type="resolution" value="2.80 A"/>
    <property type="chains" value="11/21=1-98"/>
</dbReference>
<dbReference type="PDB" id="5HD1">
    <property type="method" value="X-ray"/>
    <property type="resolution" value="2.70 A"/>
    <property type="chains" value="11/21=1-98"/>
</dbReference>
<dbReference type="PDB" id="5IB7">
    <property type="method" value="X-ray"/>
    <property type="resolution" value="2.99 A"/>
    <property type="chains" value="F5/J8=1-98"/>
</dbReference>
<dbReference type="PDB" id="5IB8">
    <property type="method" value="X-ray"/>
    <property type="resolution" value="3.13 A"/>
    <property type="chains" value="F5/J8=1-98"/>
</dbReference>
<dbReference type="PDB" id="5IBB">
    <property type="method" value="X-ray"/>
    <property type="resolution" value="2.96 A"/>
    <property type="chains" value="F5/J8=1-98"/>
</dbReference>
<dbReference type="PDB" id="5J30">
    <property type="method" value="X-ray"/>
    <property type="resolution" value="3.20 A"/>
    <property type="chains" value="R1/Y1=1-98"/>
</dbReference>
<dbReference type="PDB" id="5J3C">
    <property type="method" value="X-ray"/>
    <property type="resolution" value="3.04 A"/>
    <property type="chains" value="R1/Y1=1-98"/>
</dbReference>
<dbReference type="PDB" id="5J4B">
    <property type="method" value="X-ray"/>
    <property type="resolution" value="2.60 A"/>
    <property type="chains" value="11/21=1-98"/>
</dbReference>
<dbReference type="PDB" id="5J4C">
    <property type="method" value="X-ray"/>
    <property type="resolution" value="2.80 A"/>
    <property type="chains" value="11/21=1-98"/>
</dbReference>
<dbReference type="PDB" id="5J8B">
    <property type="method" value="X-ray"/>
    <property type="resolution" value="2.60 A"/>
    <property type="chains" value="1=1-98"/>
</dbReference>
<dbReference type="PDB" id="5NDJ">
    <property type="method" value="X-ray"/>
    <property type="resolution" value="3.15 A"/>
    <property type="chains" value="F5/J8=1-98"/>
</dbReference>
<dbReference type="PDB" id="5NDK">
    <property type="method" value="X-ray"/>
    <property type="resolution" value="2.95 A"/>
    <property type="chains" value="F5/J8=1-98"/>
</dbReference>
<dbReference type="PDB" id="5OT7">
    <property type="method" value="EM"/>
    <property type="resolution" value="3.80 A"/>
    <property type="chains" value="W=3-96"/>
</dbReference>
<dbReference type="PDB" id="5UQ7">
    <property type="method" value="EM"/>
    <property type="resolution" value="3.50 A"/>
    <property type="chains" value="1=2-98"/>
</dbReference>
<dbReference type="PDB" id="5UQ8">
    <property type="method" value="EM"/>
    <property type="resolution" value="3.20 A"/>
    <property type="chains" value="1=2-98"/>
</dbReference>
<dbReference type="PDB" id="5VP2">
    <property type="method" value="X-ray"/>
    <property type="resolution" value="2.80 A"/>
    <property type="chains" value="11/21=1-98"/>
</dbReference>
<dbReference type="PDB" id="5VPO">
    <property type="method" value="X-ray"/>
    <property type="resolution" value="3.34 A"/>
    <property type="chains" value="R1/Y1=1-98"/>
</dbReference>
<dbReference type="PDB" id="5VPP">
    <property type="method" value="X-ray"/>
    <property type="resolution" value="3.90 A"/>
    <property type="chains" value="R1/Y1=1-98"/>
</dbReference>
<dbReference type="PDB" id="5W4K">
    <property type="method" value="X-ray"/>
    <property type="resolution" value="2.70 A"/>
    <property type="chains" value="11/21=1-98"/>
</dbReference>
<dbReference type="PDB" id="5WIS">
    <property type="method" value="X-ray"/>
    <property type="resolution" value="2.70 A"/>
    <property type="chains" value="11/21=1-98"/>
</dbReference>
<dbReference type="PDB" id="5WIT">
    <property type="method" value="X-ray"/>
    <property type="resolution" value="2.60 A"/>
    <property type="chains" value="11/21=1-98"/>
</dbReference>
<dbReference type="PDB" id="6BUW">
    <property type="method" value="X-ray"/>
    <property type="resolution" value="3.50 A"/>
    <property type="chains" value="R1/Y1=1-98"/>
</dbReference>
<dbReference type="PDB" id="6BZ6">
    <property type="method" value="X-ray"/>
    <property type="resolution" value="3.18 A"/>
    <property type="chains" value="R1/Y1=1-98"/>
</dbReference>
<dbReference type="PDB" id="6BZ7">
    <property type="method" value="X-ray"/>
    <property type="resolution" value="3.68 A"/>
    <property type="chains" value="R1/Y1=1-98"/>
</dbReference>
<dbReference type="PDB" id="6BZ8">
    <property type="method" value="X-ray"/>
    <property type="resolution" value="3.74 A"/>
    <property type="chains" value="R1/Y1=1-98"/>
</dbReference>
<dbReference type="PDB" id="6C5L">
    <property type="method" value="X-ray"/>
    <property type="resolution" value="3.20 A"/>
    <property type="chains" value="B1/D1=1-98"/>
</dbReference>
<dbReference type="PDB" id="6CAE">
    <property type="method" value="X-ray"/>
    <property type="resolution" value="2.60 A"/>
    <property type="chains" value="11/21=1-98"/>
</dbReference>
<dbReference type="PDB" id="6CFJ">
    <property type="method" value="X-ray"/>
    <property type="resolution" value="2.80 A"/>
    <property type="chains" value="11/21=1-98"/>
</dbReference>
<dbReference type="PDB" id="6CFK">
    <property type="method" value="X-ray"/>
    <property type="resolution" value="2.70 A"/>
    <property type="chains" value="11/21=1-98"/>
</dbReference>
<dbReference type="PDB" id="6CFL">
    <property type="method" value="X-ray"/>
    <property type="resolution" value="2.60 A"/>
    <property type="chains" value="11/21=1-98"/>
</dbReference>
<dbReference type="PDB" id="6CZR">
    <property type="method" value="X-ray"/>
    <property type="resolution" value="3.14 A"/>
    <property type="chains" value="11/21=2-98"/>
</dbReference>
<dbReference type="PDB" id="6FKR">
    <property type="method" value="X-ray"/>
    <property type="resolution" value="3.20 A"/>
    <property type="chains" value="11/21=2-98"/>
</dbReference>
<dbReference type="PDB" id="6GSJ">
    <property type="method" value="X-ray"/>
    <property type="resolution" value="2.96 A"/>
    <property type="chains" value="F5/J8=1-98"/>
</dbReference>
<dbReference type="PDB" id="6GSK">
    <property type="method" value="X-ray"/>
    <property type="resolution" value="3.36 A"/>
    <property type="chains" value="F5/J8=1-98"/>
</dbReference>
<dbReference type="PDB" id="6GSL">
    <property type="method" value="X-ray"/>
    <property type="resolution" value="3.16 A"/>
    <property type="chains" value="F5/J8=1-98"/>
</dbReference>
<dbReference type="PDB" id="6GZQ">
    <property type="method" value="EM"/>
    <property type="resolution" value="3.28 A"/>
    <property type="chains" value="W1=2-98"/>
</dbReference>
<dbReference type="PDB" id="6GZX">
    <property type="method" value="EM"/>
    <property type="resolution" value="4.57 A"/>
    <property type="chains" value="W1/W2=2-98"/>
</dbReference>
<dbReference type="PDB" id="6GZZ">
    <property type="method" value="EM"/>
    <property type="resolution" value="4.13 A"/>
    <property type="chains" value="W1/W2=2-98"/>
</dbReference>
<dbReference type="PDB" id="6N9E">
    <property type="method" value="X-ray"/>
    <property type="resolution" value="3.70 A"/>
    <property type="chains" value="11/21=1-98"/>
</dbReference>
<dbReference type="PDB" id="6N9F">
    <property type="method" value="X-ray"/>
    <property type="resolution" value="3.70 A"/>
    <property type="chains" value="11/21=1-98"/>
</dbReference>
<dbReference type="PDB" id="6ND5">
    <property type="method" value="X-ray"/>
    <property type="resolution" value="2.60 A"/>
    <property type="chains" value="11/21=1-98"/>
</dbReference>
<dbReference type="PDB" id="6ND6">
    <property type="method" value="X-ray"/>
    <property type="resolution" value="2.85 A"/>
    <property type="chains" value="11/21=1-98"/>
</dbReference>
<dbReference type="PDB" id="6NDK">
    <property type="method" value="X-ray"/>
    <property type="resolution" value="3.64 A"/>
    <property type="chains" value="R1/Y1=1-98"/>
</dbReference>
<dbReference type="PDB" id="6NSH">
    <property type="method" value="X-ray"/>
    <property type="resolution" value="3.40 A"/>
    <property type="chains" value="R1/Y1=1-98"/>
</dbReference>
<dbReference type="PDB" id="6NTA">
    <property type="method" value="X-ray"/>
    <property type="resolution" value="3.10 A"/>
    <property type="chains" value="R1/Y1=1-98"/>
</dbReference>
<dbReference type="PDB" id="6NUO">
    <property type="method" value="X-ray"/>
    <property type="resolution" value="3.20 A"/>
    <property type="chains" value="R1/Y1=1-98"/>
</dbReference>
<dbReference type="PDB" id="6NWY">
    <property type="method" value="X-ray"/>
    <property type="resolution" value="3.50 A"/>
    <property type="chains" value="R1/Y1=1-98"/>
</dbReference>
<dbReference type="PDB" id="6O3M">
    <property type="method" value="X-ray"/>
    <property type="resolution" value="3.97 A"/>
    <property type="chains" value="R1/Y1=1-98"/>
</dbReference>
<dbReference type="PDB" id="6O97">
    <property type="method" value="X-ray"/>
    <property type="resolution" value="2.75 A"/>
    <property type="chains" value="11/21=1-98"/>
</dbReference>
<dbReference type="PDB" id="6OF1">
    <property type="method" value="X-ray"/>
    <property type="resolution" value="2.80 A"/>
    <property type="chains" value="11/21=1-98"/>
</dbReference>
<dbReference type="PDB" id="6OF6">
    <property type="method" value="X-ray"/>
    <property type="resolution" value="3.20 A"/>
    <property type="chains" value="R1/Y1=1-98"/>
</dbReference>
<dbReference type="PDB" id="6OJ2">
    <property type="method" value="X-ray"/>
    <property type="resolution" value="3.20 A"/>
    <property type="chains" value="R1/Y1=1-98"/>
</dbReference>
<dbReference type="PDB" id="6OPE">
    <property type="method" value="X-ray"/>
    <property type="resolution" value="3.10 A"/>
    <property type="chains" value="R1/Y1=1-98"/>
</dbReference>
<dbReference type="PDB" id="6ORD">
    <property type="method" value="X-ray"/>
    <property type="resolution" value="3.10 A"/>
    <property type="chains" value="R1/Y1=1-98"/>
</dbReference>
<dbReference type="PDB" id="6OSI">
    <property type="method" value="X-ray"/>
    <property type="resolution" value="4.14 A"/>
    <property type="chains" value="R1/Y1=1-98"/>
</dbReference>
<dbReference type="PDB" id="6OTR">
    <property type="method" value="X-ray"/>
    <property type="resolution" value="3.12 A"/>
    <property type="chains" value="R1/Y1=1-98"/>
</dbReference>
<dbReference type="PDB" id="6OXA">
    <property type="method" value="X-ray"/>
    <property type="resolution" value="3.25 A"/>
    <property type="chains" value="R1/Y1=1-98"/>
</dbReference>
<dbReference type="PDB" id="6OXI">
    <property type="method" value="X-ray"/>
    <property type="resolution" value="3.50 A"/>
    <property type="chains" value="R1/Y1=1-98"/>
</dbReference>
<dbReference type="PDB" id="6Q95">
    <property type="method" value="EM"/>
    <property type="resolution" value="3.70 A"/>
    <property type="chains" value="X=8-96"/>
</dbReference>
<dbReference type="PDB" id="6QNQ">
    <property type="method" value="X-ray"/>
    <property type="resolution" value="3.50 A"/>
    <property type="chains" value="F5/J8=1-96"/>
</dbReference>
<dbReference type="PDB" id="6QNR">
    <property type="method" value="X-ray"/>
    <property type="resolution" value="3.10 A"/>
    <property type="chains" value="F5/J8=1-98"/>
</dbReference>
<dbReference type="PDB" id="6UCQ">
    <property type="method" value="X-ray"/>
    <property type="resolution" value="3.50 A"/>
    <property type="chains" value="11/21=1-98"/>
</dbReference>
<dbReference type="PDB" id="6UO1">
    <property type="method" value="X-ray"/>
    <property type="resolution" value="2.95 A"/>
    <property type="chains" value="11/21=1-98"/>
</dbReference>
<dbReference type="PDB" id="6XHV">
    <property type="method" value="X-ray"/>
    <property type="resolution" value="2.40 A"/>
    <property type="chains" value="11/21=1-98"/>
</dbReference>
<dbReference type="PDB" id="6XHW">
    <property type="method" value="X-ray"/>
    <property type="resolution" value="2.50 A"/>
    <property type="chains" value="11/21=1-98"/>
</dbReference>
<dbReference type="PDB" id="6XHX">
    <property type="method" value="X-ray"/>
    <property type="resolution" value="2.55 A"/>
    <property type="chains" value="11/21=1-98"/>
</dbReference>
<dbReference type="PDB" id="6XHY">
    <property type="method" value="X-ray"/>
    <property type="resolution" value="2.60 A"/>
    <property type="chains" value="11/21=1-98"/>
</dbReference>
<dbReference type="PDB" id="6XQD">
    <property type="method" value="X-ray"/>
    <property type="resolution" value="2.80 A"/>
    <property type="chains" value="11/21=1-98"/>
</dbReference>
<dbReference type="PDB" id="6XQE">
    <property type="method" value="X-ray"/>
    <property type="resolution" value="3.00 A"/>
    <property type="chains" value="11/21=1-98"/>
</dbReference>
<dbReference type="PDB" id="7AZO">
    <property type="method" value="X-ray"/>
    <property type="resolution" value="3.30 A"/>
    <property type="chains" value="L28A/L28B=1-98"/>
</dbReference>
<dbReference type="PDB" id="7AZS">
    <property type="method" value="X-ray"/>
    <property type="resolution" value="3.10 A"/>
    <property type="chains" value="L28A/L28B=1-98"/>
</dbReference>
<dbReference type="PDB" id="7JQL">
    <property type="method" value="X-ray"/>
    <property type="resolution" value="3.00 A"/>
    <property type="chains" value="11/21=1-98"/>
</dbReference>
<dbReference type="PDB" id="7JQM">
    <property type="method" value="X-ray"/>
    <property type="resolution" value="3.05 A"/>
    <property type="chains" value="11/21=1-98"/>
</dbReference>
<dbReference type="PDB" id="7LH5">
    <property type="method" value="X-ray"/>
    <property type="resolution" value="3.27 A"/>
    <property type="chains" value="B1/D1=1-98"/>
</dbReference>
<dbReference type="PDB" id="7MD7">
    <property type="method" value="X-ray"/>
    <property type="resolution" value="2.80 A"/>
    <property type="chains" value="11/21=1-98"/>
</dbReference>
<dbReference type="PDB" id="7RQ8">
    <property type="method" value="X-ray"/>
    <property type="resolution" value="2.50 A"/>
    <property type="chains" value="11/21=1-98"/>
</dbReference>
<dbReference type="PDB" id="7RQ9">
    <property type="method" value="X-ray"/>
    <property type="resolution" value="2.60 A"/>
    <property type="chains" value="11/21=1-98"/>
</dbReference>
<dbReference type="PDB" id="7RQA">
    <property type="method" value="X-ray"/>
    <property type="resolution" value="2.40 A"/>
    <property type="chains" value="11/21=1-98"/>
</dbReference>
<dbReference type="PDB" id="7RQB">
    <property type="method" value="X-ray"/>
    <property type="resolution" value="2.45 A"/>
    <property type="chains" value="11/21=1-98"/>
</dbReference>
<dbReference type="PDB" id="7RQC">
    <property type="method" value="X-ray"/>
    <property type="resolution" value="2.50 A"/>
    <property type="chains" value="11/21=1-98"/>
</dbReference>
<dbReference type="PDB" id="7RQD">
    <property type="method" value="X-ray"/>
    <property type="resolution" value="2.50 A"/>
    <property type="chains" value="11/21=1-98"/>
</dbReference>
<dbReference type="PDB" id="7RQE">
    <property type="method" value="X-ray"/>
    <property type="resolution" value="2.40 A"/>
    <property type="chains" value="11/21=1-98"/>
</dbReference>
<dbReference type="PDB" id="7U2H">
    <property type="method" value="X-ray"/>
    <property type="resolution" value="2.55 A"/>
    <property type="chains" value="11/21=1-98"/>
</dbReference>
<dbReference type="PDB" id="7U2I">
    <property type="method" value="X-ray"/>
    <property type="resolution" value="2.55 A"/>
    <property type="chains" value="11/21=1-98"/>
</dbReference>
<dbReference type="PDB" id="7U2J">
    <property type="method" value="X-ray"/>
    <property type="resolution" value="2.55 A"/>
    <property type="chains" value="11/21=1-98"/>
</dbReference>
<dbReference type="PDB" id="8CVJ">
    <property type="method" value="X-ray"/>
    <property type="resolution" value="2.40 A"/>
    <property type="chains" value="11/21=1-98"/>
</dbReference>
<dbReference type="PDB" id="8CVK">
    <property type="method" value="X-ray"/>
    <property type="resolution" value="2.50 A"/>
    <property type="chains" value="11/21=1-98"/>
</dbReference>
<dbReference type="PDB" id="8CVL">
    <property type="method" value="X-ray"/>
    <property type="resolution" value="2.30 A"/>
    <property type="chains" value="11/21=1-98"/>
</dbReference>
<dbReference type="PDB" id="8EKB">
    <property type="method" value="X-ray"/>
    <property type="resolution" value="2.70 A"/>
    <property type="chains" value="11/21=1-98"/>
</dbReference>
<dbReference type="PDB" id="8EV6">
    <property type="method" value="X-ray"/>
    <property type="resolution" value="2.95 A"/>
    <property type="chains" value="11/21=1-98"/>
</dbReference>
<dbReference type="PDB" id="8EV7">
    <property type="method" value="X-ray"/>
    <property type="resolution" value="2.89 A"/>
    <property type="chains" value="11/21=1-98"/>
</dbReference>
<dbReference type="PDB" id="8FC1">
    <property type="method" value="X-ray"/>
    <property type="resolution" value="2.50 A"/>
    <property type="chains" value="11/21=1-98"/>
</dbReference>
<dbReference type="PDB" id="8FC2">
    <property type="method" value="X-ray"/>
    <property type="resolution" value="2.50 A"/>
    <property type="chains" value="11/21=1-98"/>
</dbReference>
<dbReference type="PDB" id="8FC3">
    <property type="method" value="X-ray"/>
    <property type="resolution" value="2.60 A"/>
    <property type="chains" value="11/21=1-98"/>
</dbReference>
<dbReference type="PDB" id="8FC4">
    <property type="method" value="X-ray"/>
    <property type="resolution" value="2.45 A"/>
    <property type="chains" value="11/21=1-98"/>
</dbReference>
<dbReference type="PDB" id="8FC5">
    <property type="method" value="X-ray"/>
    <property type="resolution" value="2.65 A"/>
    <property type="chains" value="11/21=1-98"/>
</dbReference>
<dbReference type="PDB" id="8FC6">
    <property type="method" value="X-ray"/>
    <property type="resolution" value="2.35 A"/>
    <property type="chains" value="11/21=1-98"/>
</dbReference>
<dbReference type="PDB" id="8FOM">
    <property type="method" value="X-ray"/>
    <property type="resolution" value="3.58 A"/>
    <property type="chains" value="R1/Y1=1-98"/>
</dbReference>
<dbReference type="PDB" id="8FON">
    <property type="method" value="X-ray"/>
    <property type="resolution" value="3.64 A"/>
    <property type="chains" value="R1/Y1=1-98"/>
</dbReference>
<dbReference type="PDB" id="8G29">
    <property type="method" value="X-ray"/>
    <property type="resolution" value="2.55 A"/>
    <property type="chains" value="11/21=1-98"/>
</dbReference>
<dbReference type="PDB" id="8G2A">
    <property type="method" value="X-ray"/>
    <property type="resolution" value="2.45 A"/>
    <property type="chains" value="11/21=1-98"/>
</dbReference>
<dbReference type="PDB" id="8G2B">
    <property type="method" value="X-ray"/>
    <property type="resolution" value="2.55 A"/>
    <property type="chains" value="11/21=1-98"/>
</dbReference>
<dbReference type="PDB" id="8G2C">
    <property type="method" value="X-ray"/>
    <property type="resolution" value="2.65 A"/>
    <property type="chains" value="11/21=1-98"/>
</dbReference>
<dbReference type="PDB" id="8G2D">
    <property type="method" value="X-ray"/>
    <property type="resolution" value="2.70 A"/>
    <property type="chains" value="11/21=1-98"/>
</dbReference>
<dbReference type="PDB" id="8T8B">
    <property type="method" value="X-ray"/>
    <property type="resolution" value="2.65 A"/>
    <property type="chains" value="11/21=1-98"/>
</dbReference>
<dbReference type="PDB" id="8T8C">
    <property type="method" value="X-ray"/>
    <property type="resolution" value="2.60 A"/>
    <property type="chains" value="11/21=1-98"/>
</dbReference>
<dbReference type="PDB" id="8UD6">
    <property type="method" value="X-ray"/>
    <property type="resolution" value="2.70 A"/>
    <property type="chains" value="11/21=1-98"/>
</dbReference>
<dbReference type="PDB" id="8UD7">
    <property type="method" value="X-ray"/>
    <property type="resolution" value="2.55 A"/>
    <property type="chains" value="11/21=1-98"/>
</dbReference>
<dbReference type="PDB" id="8UD8">
    <property type="method" value="X-ray"/>
    <property type="resolution" value="2.60 A"/>
    <property type="chains" value="11/21=1-98"/>
</dbReference>
<dbReference type="PDB" id="8UVR">
    <property type="method" value="X-ray"/>
    <property type="resolution" value="2.60 A"/>
    <property type="chains" value="11/21=1-98"/>
</dbReference>
<dbReference type="PDB" id="8UVS">
    <property type="method" value="X-ray"/>
    <property type="resolution" value="2.75 A"/>
    <property type="chains" value="11/21=1-98"/>
</dbReference>
<dbReference type="PDB" id="8VTU">
    <property type="method" value="X-ray"/>
    <property type="resolution" value="2.40 A"/>
    <property type="chains" value="11/21=1-98"/>
</dbReference>
<dbReference type="PDB" id="8VTV">
    <property type="method" value="X-ray"/>
    <property type="resolution" value="2.55 A"/>
    <property type="chains" value="11/21=1-98"/>
</dbReference>
<dbReference type="PDB" id="8VTW">
    <property type="method" value="X-ray"/>
    <property type="resolution" value="2.35 A"/>
    <property type="chains" value="11/21=1-98"/>
</dbReference>
<dbReference type="PDB" id="8VTX">
    <property type="method" value="X-ray"/>
    <property type="resolution" value="2.40 A"/>
    <property type="chains" value="11/21=1-98"/>
</dbReference>
<dbReference type="PDB" id="8VTY">
    <property type="method" value="X-ray"/>
    <property type="resolution" value="2.60 A"/>
    <property type="chains" value="11/21=1-98"/>
</dbReference>
<dbReference type="PDB" id="8WV1">
    <property type="method" value="X-ray"/>
    <property type="resolution" value="3.99 A"/>
    <property type="chains" value="W/w=1-98"/>
</dbReference>
<dbReference type="PDB" id="9B00">
    <property type="method" value="X-ray"/>
    <property type="resolution" value="2.80 A"/>
    <property type="chains" value="11/21=1-98"/>
</dbReference>
<dbReference type="PDB" id="9D0J">
    <property type="method" value="X-ray"/>
    <property type="resolution" value="2.50 A"/>
    <property type="chains" value="11/21=1-98"/>
</dbReference>
<dbReference type="PDB" id="9D7R">
    <property type="method" value="X-ray"/>
    <property type="resolution" value="2.70 A"/>
    <property type="chains" value="11/21=1-98"/>
</dbReference>
<dbReference type="PDB" id="9D7S">
    <property type="method" value="X-ray"/>
    <property type="resolution" value="2.85 A"/>
    <property type="chains" value="11/21=1-98"/>
</dbReference>
<dbReference type="PDB" id="9D7T">
    <property type="method" value="X-ray"/>
    <property type="resolution" value="2.70 A"/>
    <property type="chains" value="11/21=1-98"/>
</dbReference>
<dbReference type="PDB" id="9DFC">
    <property type="method" value="X-ray"/>
    <property type="resolution" value="2.50 A"/>
    <property type="chains" value="11/21=1-98"/>
</dbReference>
<dbReference type="PDB" id="9DFD">
    <property type="method" value="X-ray"/>
    <property type="resolution" value="2.60 A"/>
    <property type="chains" value="11/21=1-98"/>
</dbReference>
<dbReference type="PDB" id="9DFE">
    <property type="method" value="X-ray"/>
    <property type="resolution" value="2.60 A"/>
    <property type="chains" value="11/21=1-98"/>
</dbReference>
<dbReference type="PDBsum" id="1VVJ"/>
<dbReference type="PDBsum" id="1VY4"/>
<dbReference type="PDBsum" id="1VY5"/>
<dbReference type="PDBsum" id="1VY6"/>
<dbReference type="PDBsum" id="1VY7"/>
<dbReference type="PDBsum" id="4L47"/>
<dbReference type="PDBsum" id="4L71"/>
<dbReference type="PDBsum" id="4LEL"/>
<dbReference type="PDBsum" id="4LFZ"/>
<dbReference type="PDBsum" id="4LNT"/>
<dbReference type="PDBsum" id="4LSK"/>
<dbReference type="PDBsum" id="4LT8"/>
<dbReference type="PDBsum" id="4P6F"/>
<dbReference type="PDBsum" id="4P70"/>
<dbReference type="PDBsum" id="4TUA"/>
<dbReference type="PDBsum" id="4TUB"/>
<dbReference type="PDBsum" id="4TUC"/>
<dbReference type="PDBsum" id="4TUD"/>
<dbReference type="PDBsum" id="4TUE"/>
<dbReference type="PDBsum" id="4V51"/>
<dbReference type="PDBsum" id="4V5A"/>
<dbReference type="PDBsum" id="4V5C"/>
<dbReference type="PDBsum" id="4V5D"/>
<dbReference type="PDBsum" id="4V5E"/>
<dbReference type="PDBsum" id="4V5F"/>
<dbReference type="PDBsum" id="4V5G"/>
<dbReference type="PDBsum" id="4V5J"/>
<dbReference type="PDBsum" id="4V5K"/>
<dbReference type="PDBsum" id="4V5L"/>
<dbReference type="PDBsum" id="4V5M"/>
<dbReference type="PDBsum" id="4V5N"/>
<dbReference type="PDBsum" id="4V5P"/>
<dbReference type="PDBsum" id="4V5Q"/>
<dbReference type="PDBsum" id="4V5R"/>
<dbReference type="PDBsum" id="4V5S"/>
<dbReference type="PDBsum" id="4V68"/>
<dbReference type="PDBsum" id="4V6A"/>
<dbReference type="PDBsum" id="4V6F"/>
<dbReference type="PDBsum" id="4V6G"/>
<dbReference type="PDBsum" id="4V7J"/>
<dbReference type="PDBsum" id="4V7K"/>
<dbReference type="PDBsum" id="4V7L"/>
<dbReference type="PDBsum" id="4V7M"/>
<dbReference type="PDBsum" id="4V7W"/>
<dbReference type="PDBsum" id="4V7X"/>
<dbReference type="PDBsum" id="4V7Y"/>
<dbReference type="PDBsum" id="4V7Z"/>
<dbReference type="PDBsum" id="4V87"/>
<dbReference type="PDBsum" id="4V8A"/>
<dbReference type="PDBsum" id="4V8B"/>
<dbReference type="PDBsum" id="4V8C"/>
<dbReference type="PDBsum" id="4V8D"/>
<dbReference type="PDBsum" id="4V8E"/>
<dbReference type="PDBsum" id="4V8F"/>
<dbReference type="PDBsum" id="4V8G"/>
<dbReference type="PDBsum" id="4V8H"/>
<dbReference type="PDBsum" id="4V8I"/>
<dbReference type="PDBsum" id="4V8J"/>
<dbReference type="PDBsum" id="4V8N"/>
<dbReference type="PDBsum" id="4V8O"/>
<dbReference type="PDBsum" id="4V8Q"/>
<dbReference type="PDBsum" id="4V8U"/>
<dbReference type="PDBsum" id="4V8X"/>
<dbReference type="PDBsum" id="4V90"/>
<dbReference type="PDBsum" id="4V95"/>
<dbReference type="PDBsum" id="4V97"/>
<dbReference type="PDBsum" id="4V9A"/>
<dbReference type="PDBsum" id="4V9B"/>
<dbReference type="PDBsum" id="4V9H"/>
<dbReference type="PDBsum" id="4V9I"/>
<dbReference type="PDBsum" id="4V9R"/>
<dbReference type="PDBsum" id="4V9S"/>
<dbReference type="PDBsum" id="4W2E"/>
<dbReference type="PDBsum" id="4W2F"/>
<dbReference type="PDBsum" id="4W2G"/>
<dbReference type="PDBsum" id="4W2H"/>
<dbReference type="PDBsum" id="4W2I"/>
<dbReference type="PDBsum" id="4W4G"/>
<dbReference type="PDBsum" id="4WPO"/>
<dbReference type="PDBsum" id="4WQ1"/>
<dbReference type="PDBsum" id="4WQF"/>
<dbReference type="PDBsum" id="4WQR"/>
<dbReference type="PDBsum" id="4WQU"/>
<dbReference type="PDBsum" id="4WQY"/>
<dbReference type="PDBsum" id="4WR6"/>
<dbReference type="PDBsum" id="4WRA"/>
<dbReference type="PDBsum" id="4WRO"/>
<dbReference type="PDBsum" id="4WSD"/>
<dbReference type="PDBsum" id="4WSM"/>
<dbReference type="PDBsum" id="4WT1"/>
<dbReference type="PDBsum" id="4WT8"/>
<dbReference type="PDBsum" id="4WU1"/>
<dbReference type="PDBsum" id="4WZD"/>
<dbReference type="PDBsum" id="4WZO"/>
<dbReference type="PDBsum" id="4Y4O"/>
<dbReference type="PDBsum" id="4Y4P"/>
<dbReference type="PDBsum" id="4YPB"/>
<dbReference type="PDBsum" id="4YZV"/>
<dbReference type="PDBsum" id="4Z3S"/>
<dbReference type="PDBsum" id="4Z8C"/>
<dbReference type="PDBsum" id="4ZER"/>
<dbReference type="PDBsum" id="4ZSN"/>
<dbReference type="PDBsum" id="5CZP"/>
<dbReference type="PDBsum" id="5D8B"/>
<dbReference type="PDBsum" id="5DFE"/>
<dbReference type="PDBsum" id="5DOX"/>
<dbReference type="PDBsum" id="5DOY"/>
<dbReference type="PDBsum" id="5E7K"/>
<dbReference type="PDBsum" id="5E81"/>
<dbReference type="PDBsum" id="5EL4"/>
<dbReference type="PDBsum" id="5EL5"/>
<dbReference type="PDBsum" id="5EL6"/>
<dbReference type="PDBsum" id="5EL7"/>
<dbReference type="PDBsum" id="5F8K"/>
<dbReference type="PDBsum" id="5FDU"/>
<dbReference type="PDBsum" id="5FDV"/>
<dbReference type="PDBsum" id="5HAU"/>
<dbReference type="PDBsum" id="5HCP"/>
<dbReference type="PDBsum" id="5HCQ"/>
<dbReference type="PDBsum" id="5HCR"/>
<dbReference type="PDBsum" id="5HD1"/>
<dbReference type="PDBsum" id="5IB7"/>
<dbReference type="PDBsum" id="5IB8"/>
<dbReference type="PDBsum" id="5IBB"/>
<dbReference type="PDBsum" id="5J30"/>
<dbReference type="PDBsum" id="5J3C"/>
<dbReference type="PDBsum" id="5J4B"/>
<dbReference type="PDBsum" id="5J4C"/>
<dbReference type="PDBsum" id="5J8B"/>
<dbReference type="PDBsum" id="5NDJ"/>
<dbReference type="PDBsum" id="5NDK"/>
<dbReference type="PDBsum" id="5OT7"/>
<dbReference type="PDBsum" id="5UQ7"/>
<dbReference type="PDBsum" id="5UQ8"/>
<dbReference type="PDBsum" id="5VP2"/>
<dbReference type="PDBsum" id="5VPO"/>
<dbReference type="PDBsum" id="5VPP"/>
<dbReference type="PDBsum" id="5W4K"/>
<dbReference type="PDBsum" id="5WIS"/>
<dbReference type="PDBsum" id="5WIT"/>
<dbReference type="PDBsum" id="6BUW"/>
<dbReference type="PDBsum" id="6BZ6"/>
<dbReference type="PDBsum" id="6BZ7"/>
<dbReference type="PDBsum" id="6BZ8"/>
<dbReference type="PDBsum" id="6C5L"/>
<dbReference type="PDBsum" id="6CAE"/>
<dbReference type="PDBsum" id="6CFJ"/>
<dbReference type="PDBsum" id="6CFK"/>
<dbReference type="PDBsum" id="6CFL"/>
<dbReference type="PDBsum" id="6CZR"/>
<dbReference type="PDBsum" id="6FKR"/>
<dbReference type="PDBsum" id="6GSJ"/>
<dbReference type="PDBsum" id="6GSK"/>
<dbReference type="PDBsum" id="6GSL"/>
<dbReference type="PDBsum" id="6GZQ"/>
<dbReference type="PDBsum" id="6GZX"/>
<dbReference type="PDBsum" id="6GZZ"/>
<dbReference type="PDBsum" id="6N9E"/>
<dbReference type="PDBsum" id="6N9F"/>
<dbReference type="PDBsum" id="6ND5"/>
<dbReference type="PDBsum" id="6ND6"/>
<dbReference type="PDBsum" id="6NDK"/>
<dbReference type="PDBsum" id="6NSH"/>
<dbReference type="PDBsum" id="6NTA"/>
<dbReference type="PDBsum" id="6NUO"/>
<dbReference type="PDBsum" id="6NWY"/>
<dbReference type="PDBsum" id="6O3M"/>
<dbReference type="PDBsum" id="6O97"/>
<dbReference type="PDBsum" id="6OF1"/>
<dbReference type="PDBsum" id="6OF6"/>
<dbReference type="PDBsum" id="6OJ2"/>
<dbReference type="PDBsum" id="6OPE"/>
<dbReference type="PDBsum" id="6ORD"/>
<dbReference type="PDBsum" id="6OSI"/>
<dbReference type="PDBsum" id="6OTR"/>
<dbReference type="PDBsum" id="6OXA"/>
<dbReference type="PDBsum" id="6OXI"/>
<dbReference type="PDBsum" id="6Q95"/>
<dbReference type="PDBsum" id="6QNQ"/>
<dbReference type="PDBsum" id="6QNR"/>
<dbReference type="PDBsum" id="6UCQ"/>
<dbReference type="PDBsum" id="6UO1"/>
<dbReference type="PDBsum" id="6XHV"/>
<dbReference type="PDBsum" id="6XHW"/>
<dbReference type="PDBsum" id="6XHX"/>
<dbReference type="PDBsum" id="6XHY"/>
<dbReference type="PDBsum" id="6XQD"/>
<dbReference type="PDBsum" id="6XQE"/>
<dbReference type="PDBsum" id="7AZO"/>
<dbReference type="PDBsum" id="7AZS"/>
<dbReference type="PDBsum" id="7JQL"/>
<dbReference type="PDBsum" id="7JQM"/>
<dbReference type="PDBsum" id="7LH5"/>
<dbReference type="PDBsum" id="7MD7"/>
<dbReference type="PDBsum" id="7RQ8"/>
<dbReference type="PDBsum" id="7RQ9"/>
<dbReference type="PDBsum" id="7RQA"/>
<dbReference type="PDBsum" id="7RQB"/>
<dbReference type="PDBsum" id="7RQC"/>
<dbReference type="PDBsum" id="7RQD"/>
<dbReference type="PDBsum" id="7RQE"/>
<dbReference type="PDBsum" id="7U2H"/>
<dbReference type="PDBsum" id="7U2I"/>
<dbReference type="PDBsum" id="7U2J"/>
<dbReference type="PDBsum" id="8CVJ"/>
<dbReference type="PDBsum" id="8CVK"/>
<dbReference type="PDBsum" id="8CVL"/>
<dbReference type="PDBsum" id="8EKB"/>
<dbReference type="PDBsum" id="8EV6"/>
<dbReference type="PDBsum" id="8EV7"/>
<dbReference type="PDBsum" id="8FC1"/>
<dbReference type="PDBsum" id="8FC2"/>
<dbReference type="PDBsum" id="8FC3"/>
<dbReference type="PDBsum" id="8FC4"/>
<dbReference type="PDBsum" id="8FC5"/>
<dbReference type="PDBsum" id="8FC6"/>
<dbReference type="PDBsum" id="8FOM"/>
<dbReference type="PDBsum" id="8FON"/>
<dbReference type="PDBsum" id="8G29"/>
<dbReference type="PDBsum" id="8G2A"/>
<dbReference type="PDBsum" id="8G2B"/>
<dbReference type="PDBsum" id="8G2C"/>
<dbReference type="PDBsum" id="8G2D"/>
<dbReference type="PDBsum" id="8T8B"/>
<dbReference type="PDBsum" id="8T8C"/>
<dbReference type="PDBsum" id="8UD6"/>
<dbReference type="PDBsum" id="8UD7"/>
<dbReference type="PDBsum" id="8UD8"/>
<dbReference type="PDBsum" id="8UVR"/>
<dbReference type="PDBsum" id="8UVS"/>
<dbReference type="PDBsum" id="8VTU"/>
<dbReference type="PDBsum" id="8VTV"/>
<dbReference type="PDBsum" id="8VTW"/>
<dbReference type="PDBsum" id="8VTX"/>
<dbReference type="PDBsum" id="8VTY"/>
<dbReference type="PDBsum" id="8WV1"/>
<dbReference type="PDBsum" id="9B00"/>
<dbReference type="PDBsum" id="9D0J"/>
<dbReference type="PDBsum" id="9D7R"/>
<dbReference type="PDBsum" id="9D7S"/>
<dbReference type="PDBsum" id="9D7T"/>
<dbReference type="PDBsum" id="9DFC"/>
<dbReference type="PDBsum" id="9DFD"/>
<dbReference type="PDBsum" id="9DFE"/>
<dbReference type="EMDB" id="EMD-0101"/>
<dbReference type="EMDB" id="EMD-0104"/>
<dbReference type="EMDB" id="EMD-0105"/>
<dbReference type="EMDB" id="EMD-3852"/>
<dbReference type="EMDB" id="EMD-4475"/>
<dbReference type="EMDB" id="EMD-8596"/>
<dbReference type="EMDB" id="EMD-8597"/>
<dbReference type="SMR" id="P60494"/>
<dbReference type="IntAct" id="P60494">
    <property type="interactions" value="6"/>
</dbReference>
<dbReference type="EnsemblBacteria" id="BAD69865">
    <property type="protein sequence ID" value="BAD69865"/>
    <property type="gene ID" value="BAD69865"/>
</dbReference>
<dbReference type="GeneID" id="3168111"/>
<dbReference type="KEGG" id="ttj:TTHA0042"/>
<dbReference type="PATRIC" id="fig|300852.9.peg.40"/>
<dbReference type="eggNOG" id="COG0227">
    <property type="taxonomic scope" value="Bacteria"/>
</dbReference>
<dbReference type="HOGENOM" id="CLU_064548_6_0_0"/>
<dbReference type="Proteomes" id="UP000000532">
    <property type="component" value="Chromosome"/>
</dbReference>
<dbReference type="GO" id="GO:1990904">
    <property type="term" value="C:ribonucleoprotein complex"/>
    <property type="evidence" value="ECO:0007669"/>
    <property type="project" value="UniProtKB-KW"/>
</dbReference>
<dbReference type="GO" id="GO:0005840">
    <property type="term" value="C:ribosome"/>
    <property type="evidence" value="ECO:0007669"/>
    <property type="project" value="UniProtKB-KW"/>
</dbReference>
<dbReference type="GO" id="GO:0003735">
    <property type="term" value="F:structural constituent of ribosome"/>
    <property type="evidence" value="ECO:0007669"/>
    <property type="project" value="InterPro"/>
</dbReference>
<dbReference type="GO" id="GO:0006412">
    <property type="term" value="P:translation"/>
    <property type="evidence" value="ECO:0007669"/>
    <property type="project" value="UniProtKB-UniRule"/>
</dbReference>
<dbReference type="Gene3D" id="2.20.150.30">
    <property type="match status" value="1"/>
</dbReference>
<dbReference type="Gene3D" id="3.30.160.850">
    <property type="match status" value="1"/>
</dbReference>
<dbReference type="HAMAP" id="MF_00373">
    <property type="entry name" value="Ribosomal_bL28"/>
    <property type="match status" value="1"/>
</dbReference>
<dbReference type="InterPro" id="IPR050096">
    <property type="entry name" value="Bacterial_rp_bL28"/>
</dbReference>
<dbReference type="InterPro" id="IPR026569">
    <property type="entry name" value="Ribosomal_bL28"/>
</dbReference>
<dbReference type="InterPro" id="IPR034704">
    <property type="entry name" value="Ribosomal_bL28/bL31-like_sf"/>
</dbReference>
<dbReference type="InterPro" id="IPR001383">
    <property type="entry name" value="Ribosomal_bL28_bact-type"/>
</dbReference>
<dbReference type="NCBIfam" id="TIGR00009">
    <property type="entry name" value="L28"/>
    <property type="match status" value="1"/>
</dbReference>
<dbReference type="PANTHER" id="PTHR39080">
    <property type="entry name" value="50S RIBOSOMAL PROTEIN L28"/>
    <property type="match status" value="1"/>
</dbReference>
<dbReference type="PANTHER" id="PTHR39080:SF1">
    <property type="entry name" value="LARGE RIBOSOMAL SUBUNIT PROTEIN BL28A"/>
    <property type="match status" value="1"/>
</dbReference>
<dbReference type="Pfam" id="PF00830">
    <property type="entry name" value="Ribosomal_L28"/>
    <property type="match status" value="1"/>
</dbReference>
<dbReference type="SUPFAM" id="SSF143800">
    <property type="entry name" value="L28p-like"/>
    <property type="match status" value="1"/>
</dbReference>
<reference key="1">
    <citation type="submission" date="2004-11" db="EMBL/GenBank/DDBJ databases">
        <title>Complete genome sequence of Thermus thermophilus HB8.</title>
        <authorList>
            <person name="Masui R."/>
            <person name="Kurokawa K."/>
            <person name="Nakagawa N."/>
            <person name="Tokunaga F."/>
            <person name="Koyama Y."/>
            <person name="Shibata T."/>
            <person name="Oshima T."/>
            <person name="Yokoyama S."/>
            <person name="Yasunaga T."/>
            <person name="Kuramitsu S."/>
        </authorList>
    </citation>
    <scope>NUCLEOTIDE SEQUENCE [LARGE SCALE GENOMIC DNA]</scope>
    <source>
        <strain>ATCC 27634 / DSM 579 / HB8</strain>
    </source>
</reference>
<reference key="2">
    <citation type="journal article" date="2000" name="Biol. Chem.">
        <title>Identification of the 50S ribosomal proteins from the eubacterium Thermus thermophilus.</title>
        <authorList>
            <person name="Katsani K.R."/>
            <person name="Tsiboli P."/>
            <person name="Anagnostopoulos K."/>
            <person name="Urlaub H."/>
            <person name="Choli-Papadopoulou T."/>
        </authorList>
    </citation>
    <scope>PROTEIN SEQUENCE OF 2-21</scope>
    <source>
        <strain>ATCC 27634 / DSM 579 / HB8</strain>
    </source>
</reference>
<reference key="3">
    <citation type="journal article" date="2005" name="Proteomics">
        <title>Extending ribosomal protein identifications to unsequenced bacterial strains using matrix-assisted laser desorption/ionization mass spectrometry.</title>
        <authorList>
            <person name="Suh M.-J."/>
            <person name="Hamburg D.M."/>
            <person name="Gregory S.T."/>
            <person name="Dahlberg A.E."/>
            <person name="Limbach P.A."/>
        </authorList>
    </citation>
    <scope>MASS SPECTROMETRY</scope>
    <source>
        <strain>ATCC 27634 / DSM 579 / HB8</strain>
    </source>
</reference>
<reference key="4">
    <citation type="journal article" date="2001" name="Science">
        <title>Crystal structure of the ribosome at 5.5 A resolution.</title>
        <authorList>
            <person name="Yusupov M.M."/>
            <person name="Yusupova G.Z."/>
            <person name="Baucom A."/>
            <person name="Lieberman K."/>
            <person name="Earnest T.N."/>
            <person name="Cate J.H.D."/>
            <person name="Noller H.F."/>
        </authorList>
    </citation>
    <scope>STRUCTURE OF THE RIBOSOME</scope>
</reference>
<reference key="5">
    <citation type="journal article" date="2008" name="Science">
        <title>Insights into translational termination from the structure of RF2 bound to the ribosome.</title>
        <authorList>
            <person name="Weixlbaumer A."/>
            <person name="Jin H."/>
            <person name="Neubauer C."/>
            <person name="Voorhees R.M."/>
            <person name="Petry S."/>
            <person name="Kelley A.C."/>
            <person name="Ramakrishnan V."/>
        </authorList>
    </citation>
    <scope>X-RAY CRYSTALLOGRAPHY (3.45 ANGSTROMS) OF 70S RIBOSOME IN COMPLEX WITH RF2</scope>
    <scope>SUBUNIT</scope>
</reference>
<reference key="6">
    <citation type="journal article" date="2010" name="Proc. Natl. Acad. Sci. U.S.A.">
        <title>Structure of the 70S ribosome bound to release factor 2 and a substrate analog provides insights into catalysis of peptide release.</title>
        <authorList>
            <person name="Jin H."/>
            <person name="Kelley A.C."/>
            <person name="Loakes D."/>
            <person name="Ramakrishnan V."/>
        </authorList>
    </citation>
    <scope>X-RAY CRYSTALLOGRAPHY (3.10 ANGSTROMS) OF 70S RIBOSOME IN COMPLEX WITH RF2</scope>
    <scope>SUBUNIT</scope>
</reference>
<sequence length="98" mass="10978">MSKVCEISGKRPIVANSIQRRGKAKREGGVGKKTTGISKRRQYPNLQKVRVRVAGQEITFRVAASHIPKVYELVERAKGLKLEGLSPKEIKKELLKLL</sequence>